<keyword id="KW-0028">Amino-acid biosynthesis</keyword>
<keyword id="KW-0456">Lyase</keyword>
<keyword id="KW-0663">Pyridoxal phosphate</keyword>
<keyword id="KW-1185">Reference proteome</keyword>
<keyword id="KW-0791">Threonine biosynthesis</keyword>
<sequence>MWKGLIHQYKEFLPVTDQTPALTLHEGNTPLIHLPKLSEQLGIELHVKTEGVNPTGSFKDRGMVMAVAKAKEEGNDTIMCASTGNTSAAAAAYAARANMKCIVIIPNGKIAFGKLAQAVMYGAEIIAIDGNFDDALKIVRSICEKSPIALVNSVNPYRIEGQKTAAFEVCEQLGEAPDVLAIPVGNAGNITAYWKGFKEYHEKNGTGLPKMRGFEAEGAAAIVRNEVIENPETIATAIRIGNPASWDKAVKAAEESNGKIDEVTDDEILHAYQLIARVEGVFAEPGSCASIAGVLKQVKSGEIPKGSKVVAVLTGNGLKDPNTAVDISEIKPVTLPTDEDSILEYVKGAARV</sequence>
<organism>
    <name type="scientific">Bacillus subtilis (strain 168)</name>
    <dbReference type="NCBI Taxonomy" id="224308"/>
    <lineage>
        <taxon>Bacteria</taxon>
        <taxon>Bacillati</taxon>
        <taxon>Bacillota</taxon>
        <taxon>Bacilli</taxon>
        <taxon>Bacillales</taxon>
        <taxon>Bacillaceae</taxon>
        <taxon>Bacillus</taxon>
    </lineage>
</organism>
<dbReference type="EC" id="4.2.3.1"/>
<dbReference type="EMBL" id="X04603">
    <property type="protein sequence ID" value="CAA28270.1"/>
    <property type="molecule type" value="Genomic_DNA"/>
</dbReference>
<dbReference type="EMBL" id="AL009126">
    <property type="protein sequence ID" value="CAB15215.1"/>
    <property type="molecule type" value="Genomic_DNA"/>
</dbReference>
<dbReference type="EMBL" id="M23217">
    <property type="protein sequence ID" value="AAA50610.1"/>
    <property type="molecule type" value="Genomic_DNA"/>
</dbReference>
<dbReference type="PIR" id="A25364">
    <property type="entry name" value="A25364"/>
</dbReference>
<dbReference type="RefSeq" id="NP_391105.1">
    <property type="nucleotide sequence ID" value="NC_000964.3"/>
</dbReference>
<dbReference type="RefSeq" id="WP_003228697.1">
    <property type="nucleotide sequence ID" value="NZ_OZ025638.1"/>
</dbReference>
<dbReference type="SMR" id="P04990"/>
<dbReference type="FunCoup" id="P04990">
    <property type="interactions" value="249"/>
</dbReference>
<dbReference type="IntAct" id="P04990">
    <property type="interactions" value="1"/>
</dbReference>
<dbReference type="MINT" id="P04990"/>
<dbReference type="STRING" id="224308.BSU32250"/>
<dbReference type="PaxDb" id="224308-BSU32250"/>
<dbReference type="EnsemblBacteria" id="CAB15215">
    <property type="protein sequence ID" value="CAB15215"/>
    <property type="gene ID" value="BSU_32250"/>
</dbReference>
<dbReference type="GeneID" id="936660"/>
<dbReference type="KEGG" id="bsu:BSU32250"/>
<dbReference type="PATRIC" id="fig|224308.179.peg.3491"/>
<dbReference type="eggNOG" id="COG0498">
    <property type="taxonomic scope" value="Bacteria"/>
</dbReference>
<dbReference type="InParanoid" id="P04990"/>
<dbReference type="OrthoDB" id="9778118at2"/>
<dbReference type="PhylomeDB" id="P04990"/>
<dbReference type="BioCyc" id="BSUB:BSU32250-MONOMER"/>
<dbReference type="UniPathway" id="UPA00050">
    <property type="reaction ID" value="UER00065"/>
</dbReference>
<dbReference type="Proteomes" id="UP000001570">
    <property type="component" value="Chromosome"/>
</dbReference>
<dbReference type="GO" id="GO:0005737">
    <property type="term" value="C:cytoplasm"/>
    <property type="evidence" value="ECO:0000318"/>
    <property type="project" value="GO_Central"/>
</dbReference>
<dbReference type="GO" id="GO:0030170">
    <property type="term" value="F:pyridoxal phosphate binding"/>
    <property type="evidence" value="ECO:0007669"/>
    <property type="project" value="InterPro"/>
</dbReference>
<dbReference type="GO" id="GO:0004795">
    <property type="term" value="F:threonine synthase activity"/>
    <property type="evidence" value="ECO:0000318"/>
    <property type="project" value="GO_Central"/>
</dbReference>
<dbReference type="GO" id="GO:0019344">
    <property type="term" value="P:cysteine biosynthetic process"/>
    <property type="evidence" value="ECO:0000318"/>
    <property type="project" value="GO_Central"/>
</dbReference>
<dbReference type="GO" id="GO:0009088">
    <property type="term" value="P:threonine biosynthetic process"/>
    <property type="evidence" value="ECO:0007669"/>
    <property type="project" value="UniProtKB-UniPathway"/>
</dbReference>
<dbReference type="CDD" id="cd01563">
    <property type="entry name" value="Thr-synth_1"/>
    <property type="match status" value="1"/>
</dbReference>
<dbReference type="FunFam" id="3.40.50.1100:FF:000014">
    <property type="entry name" value="Threonine synthase"/>
    <property type="match status" value="1"/>
</dbReference>
<dbReference type="Gene3D" id="3.40.50.1100">
    <property type="match status" value="2"/>
</dbReference>
<dbReference type="InterPro" id="IPR050147">
    <property type="entry name" value="Ser/Thr_Dehydratase"/>
</dbReference>
<dbReference type="InterPro" id="IPR000634">
    <property type="entry name" value="Ser/Thr_deHydtase_PyrdxlP-BS"/>
</dbReference>
<dbReference type="InterPro" id="IPR004450">
    <property type="entry name" value="Thr_synthase-like"/>
</dbReference>
<dbReference type="InterPro" id="IPR026260">
    <property type="entry name" value="Thr_Synthase_bac/arc"/>
</dbReference>
<dbReference type="InterPro" id="IPR001926">
    <property type="entry name" value="TrpB-like_PALP"/>
</dbReference>
<dbReference type="InterPro" id="IPR036052">
    <property type="entry name" value="TrpB-like_PALP_sf"/>
</dbReference>
<dbReference type="NCBIfam" id="TIGR00260">
    <property type="entry name" value="thrC"/>
    <property type="match status" value="1"/>
</dbReference>
<dbReference type="PANTHER" id="PTHR48078:SF6">
    <property type="entry name" value="L-THREONINE DEHYDRATASE CATABOLIC TDCB"/>
    <property type="match status" value="1"/>
</dbReference>
<dbReference type="PANTHER" id="PTHR48078">
    <property type="entry name" value="THREONINE DEHYDRATASE, MITOCHONDRIAL-RELATED"/>
    <property type="match status" value="1"/>
</dbReference>
<dbReference type="Pfam" id="PF00291">
    <property type="entry name" value="PALP"/>
    <property type="match status" value="1"/>
</dbReference>
<dbReference type="PIRSF" id="PIRSF038945">
    <property type="entry name" value="Thr_synthase"/>
    <property type="match status" value="1"/>
</dbReference>
<dbReference type="SUPFAM" id="SSF53686">
    <property type="entry name" value="Tryptophan synthase beta subunit-like PLP-dependent enzymes"/>
    <property type="match status" value="1"/>
</dbReference>
<dbReference type="PROSITE" id="PS00165">
    <property type="entry name" value="DEHYDRATASE_SER_THR"/>
    <property type="match status" value="1"/>
</dbReference>
<protein>
    <recommendedName>
        <fullName>Threonine synthase</fullName>
        <shortName>TS</shortName>
        <ecNumber>4.2.3.1</ecNumber>
    </recommendedName>
</protein>
<name>THRC_BACSU</name>
<evidence type="ECO:0000250" key="1"/>
<evidence type="ECO:0000305" key="2"/>
<feature type="chain" id="PRO_0000185626" description="Threonine synthase">
    <location>
        <begin position="1"/>
        <end position="352"/>
    </location>
</feature>
<feature type="binding site" evidence="1">
    <location>
        <position position="85"/>
    </location>
    <ligand>
        <name>pyridoxal 5'-phosphate</name>
        <dbReference type="ChEBI" id="CHEBI:597326"/>
    </ligand>
</feature>
<feature type="binding site" evidence="1">
    <location>
        <begin position="185"/>
        <end position="189"/>
    </location>
    <ligand>
        <name>pyridoxal 5'-phosphate</name>
        <dbReference type="ChEBI" id="CHEBI:597326"/>
    </ligand>
</feature>
<feature type="binding site" evidence="1">
    <location>
        <position position="314"/>
    </location>
    <ligand>
        <name>pyridoxal 5'-phosphate</name>
        <dbReference type="ChEBI" id="CHEBI:597326"/>
    </ligand>
</feature>
<feature type="modified residue" description="N6-(pyridoxal phosphate)lysine" evidence="1">
    <location>
        <position position="59"/>
    </location>
</feature>
<comment type="function">
    <text evidence="1">Catalyzes the gamma-elimination of phosphate from L-phosphohomoserine and the beta-addition of water to produce L-threonine.</text>
</comment>
<comment type="catalytic activity">
    <reaction>
        <text>O-phospho-L-homoserine + H2O = L-threonine + phosphate</text>
        <dbReference type="Rhea" id="RHEA:10840"/>
        <dbReference type="ChEBI" id="CHEBI:15377"/>
        <dbReference type="ChEBI" id="CHEBI:43474"/>
        <dbReference type="ChEBI" id="CHEBI:57590"/>
        <dbReference type="ChEBI" id="CHEBI:57926"/>
        <dbReference type="EC" id="4.2.3.1"/>
    </reaction>
</comment>
<comment type="cofactor">
    <cofactor evidence="1">
        <name>pyridoxal 5'-phosphate</name>
        <dbReference type="ChEBI" id="CHEBI:597326"/>
    </cofactor>
</comment>
<comment type="pathway">
    <text>Amino-acid biosynthesis; L-threonine biosynthesis; L-threonine from L-aspartate: step 5/5.</text>
</comment>
<comment type="similarity">
    <text evidence="2">Belongs to the threonine synthase family.</text>
</comment>
<gene>
    <name type="primary">thrC</name>
    <name type="ordered locus">BSU32250</name>
</gene>
<proteinExistence type="inferred from homology"/>
<accession>P04990</accession>
<reference key="1">
    <citation type="journal article" date="1986" name="EMBO J.">
        <title>Evolution of biosynthetic pathways: a common ancestor for threonine synthase, threonine dehydratase and D-serine dehydratase.</title>
        <authorList>
            <person name="Parsot C."/>
        </authorList>
    </citation>
    <scope>NUCLEOTIDE SEQUENCE [GENOMIC DNA]</scope>
    <source>
        <strain>168</strain>
    </source>
</reference>
<reference key="2">
    <citation type="journal article" date="1997" name="Nature">
        <title>The complete genome sequence of the Gram-positive bacterium Bacillus subtilis.</title>
        <authorList>
            <person name="Kunst F."/>
            <person name="Ogasawara N."/>
            <person name="Moszer I."/>
            <person name="Albertini A.M."/>
            <person name="Alloni G."/>
            <person name="Azevedo V."/>
            <person name="Bertero M.G."/>
            <person name="Bessieres P."/>
            <person name="Bolotin A."/>
            <person name="Borchert S."/>
            <person name="Borriss R."/>
            <person name="Boursier L."/>
            <person name="Brans A."/>
            <person name="Braun M."/>
            <person name="Brignell S.C."/>
            <person name="Bron S."/>
            <person name="Brouillet S."/>
            <person name="Bruschi C.V."/>
            <person name="Caldwell B."/>
            <person name="Capuano V."/>
            <person name="Carter N.M."/>
            <person name="Choi S.-K."/>
            <person name="Codani J.-J."/>
            <person name="Connerton I.F."/>
            <person name="Cummings N.J."/>
            <person name="Daniel R.A."/>
            <person name="Denizot F."/>
            <person name="Devine K.M."/>
            <person name="Duesterhoeft A."/>
            <person name="Ehrlich S.D."/>
            <person name="Emmerson P.T."/>
            <person name="Entian K.-D."/>
            <person name="Errington J."/>
            <person name="Fabret C."/>
            <person name="Ferrari E."/>
            <person name="Foulger D."/>
            <person name="Fritz C."/>
            <person name="Fujita M."/>
            <person name="Fujita Y."/>
            <person name="Fuma S."/>
            <person name="Galizzi A."/>
            <person name="Galleron N."/>
            <person name="Ghim S.-Y."/>
            <person name="Glaser P."/>
            <person name="Goffeau A."/>
            <person name="Golightly E.J."/>
            <person name="Grandi G."/>
            <person name="Guiseppi G."/>
            <person name="Guy B.J."/>
            <person name="Haga K."/>
            <person name="Haiech J."/>
            <person name="Harwood C.R."/>
            <person name="Henaut A."/>
            <person name="Hilbert H."/>
            <person name="Holsappel S."/>
            <person name="Hosono S."/>
            <person name="Hullo M.-F."/>
            <person name="Itaya M."/>
            <person name="Jones L.-M."/>
            <person name="Joris B."/>
            <person name="Karamata D."/>
            <person name="Kasahara Y."/>
            <person name="Klaerr-Blanchard M."/>
            <person name="Klein C."/>
            <person name="Kobayashi Y."/>
            <person name="Koetter P."/>
            <person name="Koningstein G."/>
            <person name="Krogh S."/>
            <person name="Kumano M."/>
            <person name="Kurita K."/>
            <person name="Lapidus A."/>
            <person name="Lardinois S."/>
            <person name="Lauber J."/>
            <person name="Lazarevic V."/>
            <person name="Lee S.-M."/>
            <person name="Levine A."/>
            <person name="Liu H."/>
            <person name="Masuda S."/>
            <person name="Mauel C."/>
            <person name="Medigue C."/>
            <person name="Medina N."/>
            <person name="Mellado R.P."/>
            <person name="Mizuno M."/>
            <person name="Moestl D."/>
            <person name="Nakai S."/>
            <person name="Noback M."/>
            <person name="Noone D."/>
            <person name="O'Reilly M."/>
            <person name="Ogawa K."/>
            <person name="Ogiwara A."/>
            <person name="Oudega B."/>
            <person name="Park S.-H."/>
            <person name="Parro V."/>
            <person name="Pohl T.M."/>
            <person name="Portetelle D."/>
            <person name="Porwollik S."/>
            <person name="Prescott A.M."/>
            <person name="Presecan E."/>
            <person name="Pujic P."/>
            <person name="Purnelle B."/>
            <person name="Rapoport G."/>
            <person name="Rey M."/>
            <person name="Reynolds S."/>
            <person name="Rieger M."/>
            <person name="Rivolta C."/>
            <person name="Rocha E."/>
            <person name="Roche B."/>
            <person name="Rose M."/>
            <person name="Sadaie Y."/>
            <person name="Sato T."/>
            <person name="Scanlan E."/>
            <person name="Schleich S."/>
            <person name="Schroeter R."/>
            <person name="Scoffone F."/>
            <person name="Sekiguchi J."/>
            <person name="Sekowska A."/>
            <person name="Seror S.J."/>
            <person name="Serror P."/>
            <person name="Shin B.-S."/>
            <person name="Soldo B."/>
            <person name="Sorokin A."/>
            <person name="Tacconi E."/>
            <person name="Takagi T."/>
            <person name="Takahashi H."/>
            <person name="Takemaru K."/>
            <person name="Takeuchi M."/>
            <person name="Tamakoshi A."/>
            <person name="Tanaka T."/>
            <person name="Terpstra P."/>
            <person name="Tognoni A."/>
            <person name="Tosato V."/>
            <person name="Uchiyama S."/>
            <person name="Vandenbol M."/>
            <person name="Vannier F."/>
            <person name="Vassarotti A."/>
            <person name="Viari A."/>
            <person name="Wambutt R."/>
            <person name="Wedler E."/>
            <person name="Wedler H."/>
            <person name="Weitzenegger T."/>
            <person name="Winters P."/>
            <person name="Wipat A."/>
            <person name="Yamamoto H."/>
            <person name="Yamane K."/>
            <person name="Yasumoto K."/>
            <person name="Yata K."/>
            <person name="Yoshida K."/>
            <person name="Yoshikawa H.-F."/>
            <person name="Zumstein E."/>
            <person name="Yoshikawa H."/>
            <person name="Danchin A."/>
        </authorList>
    </citation>
    <scope>NUCLEOTIDE SEQUENCE [LARGE SCALE GENOMIC DNA]</scope>
    <source>
        <strain>168</strain>
    </source>
</reference>
<reference key="3">
    <citation type="journal article" date="1988" name="J. Biol. Chem.">
        <title>Cloning and nucleotide sequence of the Bacillus subtilis hom gene coding for homoserine dehydrogenase. Structural and evolutionary relationships with Escherichia coli aspartokinases-homoserine dehydrogenases I and II.</title>
        <authorList>
            <person name="Parsot C."/>
            <person name="Cohen G.N."/>
        </authorList>
    </citation>
    <scope>NUCLEOTIDE SEQUENCE [GENOMIC DNA] OF 1-35</scope>
    <source>
        <strain>168</strain>
    </source>
</reference>